<accession>Q8DWG1</accession>
<sequence>MTKYIFVTGGVVSSIGKGIVAASLGRLLKNRGLKVTIQKFDPYINIDPGTMSPYQHGEVYVTDDGAETDLDLGHYERFIDINLNKYSNVTTGKIYSEVLRKERKGEYLGATVQVIPHITDALKEKIKRAATTTDSDVIITEVGGTVGDIESLPFLEALRQMKADVGADNVMYIHTTLLPYLKAAGEMKTKPTQHSVKELRGLGIQPNMLVIRTEQPAGQGIKNKLAQFCDVAPEAVIESLDVDHLYQIPLNLQAQNMDQIVCDHLKLDVPVADMTEWSAMVDKVMNLKKKTKIALVGKYVELPDAYLSVVEALKHSGYVNDTAIDLNWINANEVTPETVTDLLGDADGIIVPGGFGHRGTEGKIEAIRYARENDVPMLGICLGMQLTCVEYARHVLNLEGANSAELDPDTKYPVIDIMRDQIDIEDMGGTLRLGLYPCKLKSGSKTASAYSNQEVVQRRHRHRYEFNNAFRQQFEEAGFVFSGVSPDNRLVEVVELSDKKFFVAAQYHPELQSRPNRPEELYTAFITAAVENSQAH</sequence>
<dbReference type="EC" id="6.3.4.2" evidence="1"/>
<dbReference type="EMBL" id="AE014133">
    <property type="protein sequence ID" value="AAN57880.1"/>
    <property type="molecule type" value="Genomic_DNA"/>
</dbReference>
<dbReference type="RefSeq" id="NP_720574.1">
    <property type="nucleotide sequence ID" value="NC_004350.2"/>
</dbReference>
<dbReference type="RefSeq" id="WP_002263575.1">
    <property type="nucleotide sequence ID" value="NC_004350.2"/>
</dbReference>
<dbReference type="SMR" id="Q8DWG1"/>
<dbReference type="STRING" id="210007.SMU_97"/>
<dbReference type="KEGG" id="smu:SMU_97"/>
<dbReference type="PATRIC" id="fig|210007.7.peg.83"/>
<dbReference type="eggNOG" id="COG0504">
    <property type="taxonomic scope" value="Bacteria"/>
</dbReference>
<dbReference type="HOGENOM" id="CLU_011675_5_0_9"/>
<dbReference type="OrthoDB" id="9801107at2"/>
<dbReference type="PhylomeDB" id="Q8DWG1"/>
<dbReference type="UniPathway" id="UPA00159">
    <property type="reaction ID" value="UER00277"/>
</dbReference>
<dbReference type="Proteomes" id="UP000002512">
    <property type="component" value="Chromosome"/>
</dbReference>
<dbReference type="GO" id="GO:0005829">
    <property type="term" value="C:cytosol"/>
    <property type="evidence" value="ECO:0007669"/>
    <property type="project" value="TreeGrafter"/>
</dbReference>
<dbReference type="GO" id="GO:0005524">
    <property type="term" value="F:ATP binding"/>
    <property type="evidence" value="ECO:0007669"/>
    <property type="project" value="UniProtKB-KW"/>
</dbReference>
<dbReference type="GO" id="GO:0003883">
    <property type="term" value="F:CTP synthase activity"/>
    <property type="evidence" value="ECO:0007669"/>
    <property type="project" value="UniProtKB-UniRule"/>
</dbReference>
<dbReference type="GO" id="GO:0004359">
    <property type="term" value="F:glutaminase activity"/>
    <property type="evidence" value="ECO:0007669"/>
    <property type="project" value="RHEA"/>
</dbReference>
<dbReference type="GO" id="GO:0042802">
    <property type="term" value="F:identical protein binding"/>
    <property type="evidence" value="ECO:0007669"/>
    <property type="project" value="TreeGrafter"/>
</dbReference>
<dbReference type="GO" id="GO:0046872">
    <property type="term" value="F:metal ion binding"/>
    <property type="evidence" value="ECO:0007669"/>
    <property type="project" value="UniProtKB-KW"/>
</dbReference>
<dbReference type="GO" id="GO:0044210">
    <property type="term" value="P:'de novo' CTP biosynthetic process"/>
    <property type="evidence" value="ECO:0007669"/>
    <property type="project" value="UniProtKB-UniRule"/>
</dbReference>
<dbReference type="GO" id="GO:0019856">
    <property type="term" value="P:pyrimidine nucleobase biosynthetic process"/>
    <property type="evidence" value="ECO:0007669"/>
    <property type="project" value="TreeGrafter"/>
</dbReference>
<dbReference type="CDD" id="cd03113">
    <property type="entry name" value="CTPS_N"/>
    <property type="match status" value="1"/>
</dbReference>
<dbReference type="CDD" id="cd01746">
    <property type="entry name" value="GATase1_CTP_Synthase"/>
    <property type="match status" value="1"/>
</dbReference>
<dbReference type="FunFam" id="3.40.50.300:FF:000009">
    <property type="entry name" value="CTP synthase"/>
    <property type="match status" value="1"/>
</dbReference>
<dbReference type="FunFam" id="3.40.50.880:FF:000002">
    <property type="entry name" value="CTP synthase"/>
    <property type="match status" value="1"/>
</dbReference>
<dbReference type="Gene3D" id="3.40.50.880">
    <property type="match status" value="1"/>
</dbReference>
<dbReference type="Gene3D" id="3.40.50.300">
    <property type="entry name" value="P-loop containing nucleotide triphosphate hydrolases"/>
    <property type="match status" value="1"/>
</dbReference>
<dbReference type="HAMAP" id="MF_01227">
    <property type="entry name" value="PyrG"/>
    <property type="match status" value="1"/>
</dbReference>
<dbReference type="InterPro" id="IPR029062">
    <property type="entry name" value="Class_I_gatase-like"/>
</dbReference>
<dbReference type="InterPro" id="IPR004468">
    <property type="entry name" value="CTP_synthase"/>
</dbReference>
<dbReference type="InterPro" id="IPR017456">
    <property type="entry name" value="CTP_synthase_N"/>
</dbReference>
<dbReference type="InterPro" id="IPR017926">
    <property type="entry name" value="GATASE"/>
</dbReference>
<dbReference type="InterPro" id="IPR033828">
    <property type="entry name" value="GATase1_CTP_Synthase"/>
</dbReference>
<dbReference type="InterPro" id="IPR027417">
    <property type="entry name" value="P-loop_NTPase"/>
</dbReference>
<dbReference type="NCBIfam" id="NF003792">
    <property type="entry name" value="PRK05380.1"/>
    <property type="match status" value="1"/>
</dbReference>
<dbReference type="NCBIfam" id="TIGR00337">
    <property type="entry name" value="PyrG"/>
    <property type="match status" value="1"/>
</dbReference>
<dbReference type="PANTHER" id="PTHR11550">
    <property type="entry name" value="CTP SYNTHASE"/>
    <property type="match status" value="1"/>
</dbReference>
<dbReference type="PANTHER" id="PTHR11550:SF0">
    <property type="entry name" value="CTP SYNTHASE-RELATED"/>
    <property type="match status" value="1"/>
</dbReference>
<dbReference type="Pfam" id="PF06418">
    <property type="entry name" value="CTP_synth_N"/>
    <property type="match status" value="1"/>
</dbReference>
<dbReference type="Pfam" id="PF00117">
    <property type="entry name" value="GATase"/>
    <property type="match status" value="1"/>
</dbReference>
<dbReference type="SUPFAM" id="SSF52317">
    <property type="entry name" value="Class I glutamine amidotransferase-like"/>
    <property type="match status" value="1"/>
</dbReference>
<dbReference type="SUPFAM" id="SSF52540">
    <property type="entry name" value="P-loop containing nucleoside triphosphate hydrolases"/>
    <property type="match status" value="1"/>
</dbReference>
<dbReference type="PROSITE" id="PS51273">
    <property type="entry name" value="GATASE_TYPE_1"/>
    <property type="match status" value="1"/>
</dbReference>
<evidence type="ECO:0000255" key="1">
    <source>
        <dbReference type="HAMAP-Rule" id="MF_01227"/>
    </source>
</evidence>
<gene>
    <name evidence="1" type="primary">pyrG</name>
    <name type="ordered locus">SMU_97</name>
</gene>
<keyword id="KW-0067">ATP-binding</keyword>
<keyword id="KW-0315">Glutamine amidotransferase</keyword>
<keyword id="KW-0436">Ligase</keyword>
<keyword id="KW-0460">Magnesium</keyword>
<keyword id="KW-0479">Metal-binding</keyword>
<keyword id="KW-0547">Nucleotide-binding</keyword>
<keyword id="KW-0665">Pyrimidine biosynthesis</keyword>
<keyword id="KW-1185">Reference proteome</keyword>
<comment type="function">
    <text evidence="1">Catalyzes the ATP-dependent amination of UTP to CTP with either L-glutamine or ammonia as the source of nitrogen. Regulates intracellular CTP levels through interactions with the four ribonucleotide triphosphates.</text>
</comment>
<comment type="catalytic activity">
    <reaction evidence="1">
        <text>UTP + L-glutamine + ATP + H2O = CTP + L-glutamate + ADP + phosphate + 2 H(+)</text>
        <dbReference type="Rhea" id="RHEA:26426"/>
        <dbReference type="ChEBI" id="CHEBI:15377"/>
        <dbReference type="ChEBI" id="CHEBI:15378"/>
        <dbReference type="ChEBI" id="CHEBI:29985"/>
        <dbReference type="ChEBI" id="CHEBI:30616"/>
        <dbReference type="ChEBI" id="CHEBI:37563"/>
        <dbReference type="ChEBI" id="CHEBI:43474"/>
        <dbReference type="ChEBI" id="CHEBI:46398"/>
        <dbReference type="ChEBI" id="CHEBI:58359"/>
        <dbReference type="ChEBI" id="CHEBI:456216"/>
        <dbReference type="EC" id="6.3.4.2"/>
    </reaction>
</comment>
<comment type="catalytic activity">
    <reaction evidence="1">
        <text>L-glutamine + H2O = L-glutamate + NH4(+)</text>
        <dbReference type="Rhea" id="RHEA:15889"/>
        <dbReference type="ChEBI" id="CHEBI:15377"/>
        <dbReference type="ChEBI" id="CHEBI:28938"/>
        <dbReference type="ChEBI" id="CHEBI:29985"/>
        <dbReference type="ChEBI" id="CHEBI:58359"/>
    </reaction>
</comment>
<comment type="catalytic activity">
    <reaction evidence="1">
        <text>UTP + NH4(+) + ATP = CTP + ADP + phosphate + 2 H(+)</text>
        <dbReference type="Rhea" id="RHEA:16597"/>
        <dbReference type="ChEBI" id="CHEBI:15378"/>
        <dbReference type="ChEBI" id="CHEBI:28938"/>
        <dbReference type="ChEBI" id="CHEBI:30616"/>
        <dbReference type="ChEBI" id="CHEBI:37563"/>
        <dbReference type="ChEBI" id="CHEBI:43474"/>
        <dbReference type="ChEBI" id="CHEBI:46398"/>
        <dbReference type="ChEBI" id="CHEBI:456216"/>
    </reaction>
</comment>
<comment type="activity regulation">
    <text evidence="1">Allosterically activated by GTP, when glutamine is the substrate; GTP has no effect on the reaction when ammonia is the substrate. The allosteric effector GTP functions by stabilizing the protein conformation that binds the tetrahedral intermediate(s) formed during glutamine hydrolysis. Inhibited by the product CTP, via allosteric rather than competitive inhibition.</text>
</comment>
<comment type="pathway">
    <text evidence="1">Pyrimidine metabolism; CTP biosynthesis via de novo pathway; CTP from UDP: step 2/2.</text>
</comment>
<comment type="subunit">
    <text evidence="1">Homotetramer.</text>
</comment>
<comment type="miscellaneous">
    <text evidence="1">CTPSs have evolved a hybrid strategy for distinguishing between UTP and CTP. The overlapping regions of the product feedback inhibitory and substrate sites recognize a common feature in both compounds, the triphosphate moiety. To differentiate isosteric substrate and product pyrimidine rings, an additional pocket far from the expected kinase/ligase catalytic site, specifically recognizes the cytosine and ribose portions of the product inhibitor.</text>
</comment>
<comment type="similarity">
    <text evidence="1">Belongs to the CTP synthase family.</text>
</comment>
<feature type="chain" id="PRO_0000266230" description="CTP synthase">
    <location>
        <begin position="1"/>
        <end position="536"/>
    </location>
</feature>
<feature type="domain" description="Glutamine amidotransferase type-1" evidence="1">
    <location>
        <begin position="292"/>
        <end position="535"/>
    </location>
</feature>
<feature type="region of interest" description="Amidoligase domain" evidence="1">
    <location>
        <begin position="1"/>
        <end position="267"/>
    </location>
</feature>
<feature type="active site" description="Nucleophile; for glutamine hydrolysis" evidence="1">
    <location>
        <position position="381"/>
    </location>
</feature>
<feature type="active site" evidence="1">
    <location>
        <position position="508"/>
    </location>
</feature>
<feature type="active site" evidence="1">
    <location>
        <position position="510"/>
    </location>
</feature>
<feature type="binding site" evidence="1">
    <location>
        <position position="13"/>
    </location>
    <ligand>
        <name>CTP</name>
        <dbReference type="ChEBI" id="CHEBI:37563"/>
        <note>allosteric inhibitor</note>
    </ligand>
</feature>
<feature type="binding site" evidence="1">
    <location>
        <position position="13"/>
    </location>
    <ligand>
        <name>UTP</name>
        <dbReference type="ChEBI" id="CHEBI:46398"/>
    </ligand>
</feature>
<feature type="binding site" evidence="1">
    <location>
        <begin position="14"/>
        <end position="19"/>
    </location>
    <ligand>
        <name>ATP</name>
        <dbReference type="ChEBI" id="CHEBI:30616"/>
    </ligand>
</feature>
<feature type="binding site" evidence="1">
    <location>
        <position position="54"/>
    </location>
    <ligand>
        <name>L-glutamine</name>
        <dbReference type="ChEBI" id="CHEBI:58359"/>
    </ligand>
</feature>
<feature type="binding site" evidence="1">
    <location>
        <position position="71"/>
    </location>
    <ligand>
        <name>ATP</name>
        <dbReference type="ChEBI" id="CHEBI:30616"/>
    </ligand>
</feature>
<feature type="binding site" evidence="1">
    <location>
        <position position="71"/>
    </location>
    <ligand>
        <name>Mg(2+)</name>
        <dbReference type="ChEBI" id="CHEBI:18420"/>
    </ligand>
</feature>
<feature type="binding site" evidence="1">
    <location>
        <position position="141"/>
    </location>
    <ligand>
        <name>Mg(2+)</name>
        <dbReference type="ChEBI" id="CHEBI:18420"/>
    </ligand>
</feature>
<feature type="binding site" evidence="1">
    <location>
        <begin position="148"/>
        <end position="150"/>
    </location>
    <ligand>
        <name>CTP</name>
        <dbReference type="ChEBI" id="CHEBI:37563"/>
        <note>allosteric inhibitor</note>
    </ligand>
</feature>
<feature type="binding site" evidence="1">
    <location>
        <begin position="188"/>
        <end position="193"/>
    </location>
    <ligand>
        <name>CTP</name>
        <dbReference type="ChEBI" id="CHEBI:37563"/>
        <note>allosteric inhibitor</note>
    </ligand>
</feature>
<feature type="binding site" evidence="1">
    <location>
        <begin position="188"/>
        <end position="193"/>
    </location>
    <ligand>
        <name>UTP</name>
        <dbReference type="ChEBI" id="CHEBI:46398"/>
    </ligand>
</feature>
<feature type="binding site" evidence="1">
    <location>
        <position position="224"/>
    </location>
    <ligand>
        <name>CTP</name>
        <dbReference type="ChEBI" id="CHEBI:37563"/>
        <note>allosteric inhibitor</note>
    </ligand>
</feature>
<feature type="binding site" evidence="1">
    <location>
        <position position="224"/>
    </location>
    <ligand>
        <name>UTP</name>
        <dbReference type="ChEBI" id="CHEBI:46398"/>
    </ligand>
</feature>
<feature type="binding site" evidence="1">
    <location>
        <position position="354"/>
    </location>
    <ligand>
        <name>L-glutamine</name>
        <dbReference type="ChEBI" id="CHEBI:58359"/>
    </ligand>
</feature>
<feature type="binding site" evidence="1">
    <location>
        <begin position="382"/>
        <end position="385"/>
    </location>
    <ligand>
        <name>L-glutamine</name>
        <dbReference type="ChEBI" id="CHEBI:58359"/>
    </ligand>
</feature>
<feature type="binding site" evidence="1">
    <location>
        <position position="405"/>
    </location>
    <ligand>
        <name>L-glutamine</name>
        <dbReference type="ChEBI" id="CHEBI:58359"/>
    </ligand>
</feature>
<feature type="binding site" evidence="1">
    <location>
        <position position="463"/>
    </location>
    <ligand>
        <name>L-glutamine</name>
        <dbReference type="ChEBI" id="CHEBI:58359"/>
    </ligand>
</feature>
<proteinExistence type="inferred from homology"/>
<reference key="1">
    <citation type="journal article" date="2002" name="Proc. Natl. Acad. Sci. U.S.A.">
        <title>Genome sequence of Streptococcus mutans UA159, a cariogenic dental pathogen.</title>
        <authorList>
            <person name="Ajdic D.J."/>
            <person name="McShan W.M."/>
            <person name="McLaughlin R.E."/>
            <person name="Savic G."/>
            <person name="Chang J."/>
            <person name="Carson M.B."/>
            <person name="Primeaux C."/>
            <person name="Tian R."/>
            <person name="Kenton S."/>
            <person name="Jia H.G."/>
            <person name="Lin S.P."/>
            <person name="Qian Y."/>
            <person name="Li S."/>
            <person name="Zhu H."/>
            <person name="Najar F.Z."/>
            <person name="Lai H."/>
            <person name="White J."/>
            <person name="Roe B.A."/>
            <person name="Ferretti J.J."/>
        </authorList>
    </citation>
    <scope>NUCLEOTIDE SEQUENCE [LARGE SCALE GENOMIC DNA]</scope>
    <source>
        <strain>ATCC 700610 / UA159</strain>
    </source>
</reference>
<protein>
    <recommendedName>
        <fullName evidence="1">CTP synthase</fullName>
        <ecNumber evidence="1">6.3.4.2</ecNumber>
    </recommendedName>
    <alternativeName>
        <fullName evidence="1">Cytidine 5'-triphosphate synthase</fullName>
    </alternativeName>
    <alternativeName>
        <fullName evidence="1">Cytidine triphosphate synthetase</fullName>
        <shortName evidence="1">CTP synthetase</shortName>
        <shortName evidence="1">CTPS</shortName>
    </alternativeName>
    <alternativeName>
        <fullName evidence="1">UTP--ammonia ligase</fullName>
    </alternativeName>
</protein>
<organism>
    <name type="scientific">Streptococcus mutans serotype c (strain ATCC 700610 / UA159)</name>
    <dbReference type="NCBI Taxonomy" id="210007"/>
    <lineage>
        <taxon>Bacteria</taxon>
        <taxon>Bacillati</taxon>
        <taxon>Bacillota</taxon>
        <taxon>Bacilli</taxon>
        <taxon>Lactobacillales</taxon>
        <taxon>Streptococcaceae</taxon>
        <taxon>Streptococcus</taxon>
    </lineage>
</organism>
<name>PYRG_STRMU</name>